<proteinExistence type="evidence at protein level"/>
<accession>Q6ZH92</accession>
<accession>A0A0P0VE39</accession>
<accession>Q94FP2</accession>
<feature type="transit peptide" description="Mitochondrion" evidence="5">
    <location>
        <begin position="1"/>
        <end position="58"/>
    </location>
</feature>
<feature type="chain" id="PRO_0000431747" description="Succinate dehydrogenase subunit 3-1, mitochondrial" evidence="5">
    <location>
        <begin position="59"/>
        <end position="129"/>
    </location>
</feature>
<feature type="transmembrane region" description="Helical" evidence="2">
    <location>
        <begin position="105"/>
        <end position="127"/>
    </location>
</feature>
<feature type="region of interest" description="Disordered" evidence="3">
    <location>
        <begin position="25"/>
        <end position="80"/>
    </location>
</feature>
<feature type="compositionally biased region" description="Low complexity" evidence="3">
    <location>
        <begin position="25"/>
        <end position="35"/>
    </location>
</feature>
<feature type="binding site" description="axial binding residue" evidence="1">
    <location>
        <position position="87"/>
    </location>
    <ligand>
        <name>heme</name>
        <dbReference type="ChEBI" id="CHEBI:30413"/>
        <note>ligand shared with second transmembrane subunit</note>
    </ligand>
    <ligandPart>
        <name>Fe</name>
        <dbReference type="ChEBI" id="CHEBI:18248"/>
    </ligandPart>
</feature>
<reference key="1">
    <citation type="journal article" date="2001" name="Genetics">
        <title>Multiple losses and transfers to the nucleus of two mitochondrial succinate dehydrogenase genes during angiosperm evolution.</title>
        <authorList>
            <person name="Adams K.L."/>
            <person name="Rosenblueth M."/>
            <person name="Qiu Y.L."/>
            <person name="Palmer J.D."/>
        </authorList>
    </citation>
    <scope>NUCLEOTIDE SEQUENCE [GENOMIC DNA]</scope>
</reference>
<reference key="2">
    <citation type="journal article" date="2005" name="Nature">
        <title>The map-based sequence of the rice genome.</title>
        <authorList>
            <consortium name="International rice genome sequencing project (IRGSP)"/>
        </authorList>
    </citation>
    <scope>NUCLEOTIDE SEQUENCE [LARGE SCALE GENOMIC DNA]</scope>
    <source>
        <strain>cv. Nipponbare</strain>
    </source>
</reference>
<reference key="3">
    <citation type="journal article" date="2008" name="Nucleic Acids Res.">
        <title>The rice annotation project database (RAP-DB): 2008 update.</title>
        <authorList>
            <consortium name="The rice annotation project (RAP)"/>
        </authorList>
    </citation>
    <scope>GENOME REANNOTATION</scope>
    <source>
        <strain>cv. Nipponbare</strain>
    </source>
</reference>
<reference key="4">
    <citation type="journal article" date="2013" name="Rice">
        <title>Improvement of the Oryza sativa Nipponbare reference genome using next generation sequence and optical map data.</title>
        <authorList>
            <person name="Kawahara Y."/>
            <person name="de la Bastide M."/>
            <person name="Hamilton J.P."/>
            <person name="Kanamori H."/>
            <person name="McCombie W.R."/>
            <person name="Ouyang S."/>
            <person name="Schwartz D.C."/>
            <person name="Tanaka T."/>
            <person name="Wu J."/>
            <person name="Zhou S."/>
            <person name="Childs K.L."/>
            <person name="Davidson R.M."/>
            <person name="Lin H."/>
            <person name="Quesada-Ocampo L."/>
            <person name="Vaillancourt B."/>
            <person name="Sakai H."/>
            <person name="Lee S.S."/>
            <person name="Kim J."/>
            <person name="Numa H."/>
            <person name="Itoh T."/>
            <person name="Buell C.R."/>
            <person name="Matsumoto T."/>
        </authorList>
    </citation>
    <scope>GENOME REANNOTATION</scope>
    <source>
        <strain>cv. Nipponbare</strain>
    </source>
</reference>
<reference key="5">
    <citation type="journal article" date="2005" name="PLoS Biol.">
        <title>The genomes of Oryza sativa: a history of duplications.</title>
        <authorList>
            <person name="Yu J."/>
            <person name="Wang J."/>
            <person name="Lin W."/>
            <person name="Li S."/>
            <person name="Li H."/>
            <person name="Zhou J."/>
            <person name="Ni P."/>
            <person name="Dong W."/>
            <person name="Hu S."/>
            <person name="Zeng C."/>
            <person name="Zhang J."/>
            <person name="Zhang Y."/>
            <person name="Li R."/>
            <person name="Xu Z."/>
            <person name="Li S."/>
            <person name="Li X."/>
            <person name="Zheng H."/>
            <person name="Cong L."/>
            <person name="Lin L."/>
            <person name="Yin J."/>
            <person name="Geng J."/>
            <person name="Li G."/>
            <person name="Shi J."/>
            <person name="Liu J."/>
            <person name="Lv H."/>
            <person name="Li J."/>
            <person name="Wang J."/>
            <person name="Deng Y."/>
            <person name="Ran L."/>
            <person name="Shi X."/>
            <person name="Wang X."/>
            <person name="Wu Q."/>
            <person name="Li C."/>
            <person name="Ren X."/>
            <person name="Wang J."/>
            <person name="Wang X."/>
            <person name="Li D."/>
            <person name="Liu D."/>
            <person name="Zhang X."/>
            <person name="Ji Z."/>
            <person name="Zhao W."/>
            <person name="Sun Y."/>
            <person name="Zhang Z."/>
            <person name="Bao J."/>
            <person name="Han Y."/>
            <person name="Dong L."/>
            <person name="Ji J."/>
            <person name="Chen P."/>
            <person name="Wu S."/>
            <person name="Liu J."/>
            <person name="Xiao Y."/>
            <person name="Bu D."/>
            <person name="Tan J."/>
            <person name="Yang L."/>
            <person name="Ye C."/>
            <person name="Zhang J."/>
            <person name="Xu J."/>
            <person name="Zhou Y."/>
            <person name="Yu Y."/>
            <person name="Zhang B."/>
            <person name="Zhuang S."/>
            <person name="Wei H."/>
            <person name="Liu B."/>
            <person name="Lei M."/>
            <person name="Yu H."/>
            <person name="Li Y."/>
            <person name="Xu H."/>
            <person name="Wei S."/>
            <person name="He X."/>
            <person name="Fang L."/>
            <person name="Zhang Z."/>
            <person name="Zhang Y."/>
            <person name="Huang X."/>
            <person name="Su Z."/>
            <person name="Tong W."/>
            <person name="Li J."/>
            <person name="Tong Z."/>
            <person name="Li S."/>
            <person name="Ye J."/>
            <person name="Wang L."/>
            <person name="Fang L."/>
            <person name="Lei T."/>
            <person name="Chen C.-S."/>
            <person name="Chen H.-C."/>
            <person name="Xu Z."/>
            <person name="Li H."/>
            <person name="Huang H."/>
            <person name="Zhang F."/>
            <person name="Xu H."/>
            <person name="Li N."/>
            <person name="Zhao C."/>
            <person name="Li S."/>
            <person name="Dong L."/>
            <person name="Huang Y."/>
            <person name="Li L."/>
            <person name="Xi Y."/>
            <person name="Qi Q."/>
            <person name="Li W."/>
            <person name="Zhang B."/>
            <person name="Hu W."/>
            <person name="Zhang Y."/>
            <person name="Tian X."/>
            <person name="Jiao Y."/>
            <person name="Liang X."/>
            <person name="Jin J."/>
            <person name="Gao L."/>
            <person name="Zheng W."/>
            <person name="Hao B."/>
            <person name="Liu S.-M."/>
            <person name="Wang W."/>
            <person name="Yuan L."/>
            <person name="Cao M."/>
            <person name="McDermott J."/>
            <person name="Samudrala R."/>
            <person name="Wang J."/>
            <person name="Wong G.K.-S."/>
            <person name="Yang H."/>
        </authorList>
    </citation>
    <scope>NUCLEOTIDE SEQUENCE [LARGE SCALE GENOMIC DNA]</scope>
    <source>
        <strain>cv. Nipponbare</strain>
    </source>
</reference>
<reference key="6">
    <citation type="journal article" date="2003" name="Science">
        <title>Collection, mapping, and annotation of over 28,000 cDNA clones from japonica rice.</title>
        <authorList>
            <consortium name="The rice full-length cDNA consortium"/>
        </authorList>
    </citation>
    <scope>NUCLEOTIDE SEQUENCE [LARGE SCALE MRNA]</scope>
    <source>
        <strain>cv. Nipponbare</strain>
    </source>
</reference>
<reference key="7">
    <citation type="journal article" date="2010" name="Plant Mol. Biol.">
        <title>Functional and composition differences between mitochondrial complex II in Arabidopsis and rice are correlated with the complex genetic history of the enzyme.</title>
        <authorList>
            <person name="Huang S."/>
            <person name="Taylor N.L."/>
            <person name="Narsai R."/>
            <person name="Eubel H."/>
            <person name="Whelan J."/>
            <person name="Millar A.H."/>
        </authorList>
    </citation>
    <scope>IDENTIFICATION BY MASS SPECTROMETRY</scope>
    <scope>SUBUNIT</scope>
</reference>
<gene>
    <name evidence="5" type="primary">SDH3-1</name>
    <name evidence="7" type="ordered locus">Os02g0121800</name>
    <name evidence="5" type="ordered locus">LOC_Os02g02940</name>
    <name evidence="6" type="ORF">OJ1020_C02.23</name>
    <name evidence="8" type="ORF">OsJ_05172</name>
</gene>
<dbReference type="EMBL" id="AF362741">
    <property type="protein sequence ID" value="AAK73694.1"/>
    <property type="molecule type" value="Genomic_DNA"/>
</dbReference>
<dbReference type="EMBL" id="AP004078">
    <property type="protein sequence ID" value="BAD07607.1"/>
    <property type="molecule type" value="Genomic_DNA"/>
</dbReference>
<dbReference type="EMBL" id="AP008208">
    <property type="protein sequence ID" value="BAF07635.1"/>
    <property type="molecule type" value="Genomic_DNA"/>
</dbReference>
<dbReference type="EMBL" id="AP014958">
    <property type="protein sequence ID" value="BAS76715.1"/>
    <property type="molecule type" value="Genomic_DNA"/>
</dbReference>
<dbReference type="EMBL" id="CM000139">
    <property type="protein sequence ID" value="EEE56205.1"/>
    <property type="molecule type" value="Genomic_DNA"/>
</dbReference>
<dbReference type="EMBL" id="AK103260">
    <property type="protein sequence ID" value="BAG95982.1"/>
    <property type="molecule type" value="mRNA"/>
</dbReference>
<dbReference type="RefSeq" id="XP_015626313.1">
    <property type="nucleotide sequence ID" value="XM_015770827.1"/>
</dbReference>
<dbReference type="FunCoup" id="Q6ZH92">
    <property type="interactions" value="239"/>
</dbReference>
<dbReference type="STRING" id="39947.Q6ZH92"/>
<dbReference type="PaxDb" id="39947-Q6ZH92"/>
<dbReference type="EnsemblPlants" id="Os02t0121800-01">
    <property type="protein sequence ID" value="Os02t0121800-01"/>
    <property type="gene ID" value="Os02g0121800"/>
</dbReference>
<dbReference type="Gramene" id="Os02t0121800-01">
    <property type="protein sequence ID" value="Os02t0121800-01"/>
    <property type="gene ID" value="Os02g0121800"/>
</dbReference>
<dbReference type="KEGG" id="dosa:Os02g0121800"/>
<dbReference type="eggNOG" id="ENOG502SSPD">
    <property type="taxonomic scope" value="Eukaryota"/>
</dbReference>
<dbReference type="HOGENOM" id="CLU_112203_1_0_1"/>
<dbReference type="InParanoid" id="Q6ZH92"/>
<dbReference type="OMA" id="VFISHNQ"/>
<dbReference type="OrthoDB" id="588261at2759"/>
<dbReference type="PlantReactome" id="R-OSA-1119533">
    <property type="pathway name" value="TCA cycle (plant)"/>
</dbReference>
<dbReference type="UniPathway" id="UPA00223"/>
<dbReference type="Proteomes" id="UP000000763">
    <property type="component" value="Chromosome 2"/>
</dbReference>
<dbReference type="Proteomes" id="UP000007752">
    <property type="component" value="Chromosome 2"/>
</dbReference>
<dbReference type="Proteomes" id="UP000059680">
    <property type="component" value="Chromosome 2"/>
</dbReference>
<dbReference type="GO" id="GO:0005743">
    <property type="term" value="C:mitochondrial inner membrane"/>
    <property type="evidence" value="ECO:0007669"/>
    <property type="project" value="UniProtKB-SubCell"/>
</dbReference>
<dbReference type="GO" id="GO:0045273">
    <property type="term" value="C:respiratory chain complex II (succinate dehydrogenase)"/>
    <property type="evidence" value="ECO:0000314"/>
    <property type="project" value="UniProtKB"/>
</dbReference>
<dbReference type="GO" id="GO:0009055">
    <property type="term" value="F:electron transfer activity"/>
    <property type="evidence" value="ECO:0007669"/>
    <property type="project" value="InterPro"/>
</dbReference>
<dbReference type="GO" id="GO:0046872">
    <property type="term" value="F:metal ion binding"/>
    <property type="evidence" value="ECO:0007669"/>
    <property type="project" value="UniProtKB-KW"/>
</dbReference>
<dbReference type="GO" id="GO:0006121">
    <property type="term" value="P:mitochondrial electron transport, succinate to ubiquinone"/>
    <property type="evidence" value="ECO:0000318"/>
    <property type="project" value="GO_Central"/>
</dbReference>
<dbReference type="GO" id="GO:0006099">
    <property type="term" value="P:tricarboxylic acid cycle"/>
    <property type="evidence" value="ECO:0007669"/>
    <property type="project" value="UniProtKB-UniPathway"/>
</dbReference>
<dbReference type="FunFam" id="1.20.1300.10:FF:000010">
    <property type="entry name" value="Succinate dehydrogenase subunit 3-1, mitochondrial"/>
    <property type="match status" value="1"/>
</dbReference>
<dbReference type="Gene3D" id="1.20.1300.10">
    <property type="entry name" value="Fumarate reductase/succinate dehydrogenase, transmembrane subunit"/>
    <property type="match status" value="1"/>
</dbReference>
<dbReference type="InterPro" id="IPR034804">
    <property type="entry name" value="SQR/QFR_C/D"/>
</dbReference>
<dbReference type="InterPro" id="IPR014314">
    <property type="entry name" value="Succ_DH_cytb556"/>
</dbReference>
<dbReference type="PANTHER" id="PTHR10978">
    <property type="entry name" value="SUCCINATE DEHYDROGENASE CYTOCHROME B560 SUBUNIT"/>
    <property type="match status" value="1"/>
</dbReference>
<dbReference type="PANTHER" id="PTHR10978:SF18">
    <property type="entry name" value="SUCCINATE DEHYDROGENASE SUBUNIT 3-1, MITOCHONDRIAL"/>
    <property type="match status" value="1"/>
</dbReference>
<dbReference type="SUPFAM" id="SSF81343">
    <property type="entry name" value="Fumarate reductase respiratory complex transmembrane subunits"/>
    <property type="match status" value="1"/>
</dbReference>
<sequence>MEKYHSNSRFAPFRDAPFALRGALGSSGSSFSSIDSLRRSSTLEQARGYTSRPLGAVRPKMLPSGCRPLHTSHPLSAPVANRPLSPHLPLKKPQLSATFSISHRIFGAALGAAIISIPLATKFSLMFDV</sequence>
<name>SDH31_ORYSJ</name>
<comment type="function">
    <text evidence="1">Membrane-anchoring subunit of succinate dehydrogenase (SDH).</text>
</comment>
<comment type="cofactor">
    <cofactor evidence="1">
        <name>heme</name>
        <dbReference type="ChEBI" id="CHEBI:30413"/>
    </cofactor>
</comment>
<comment type="pathway">
    <text evidence="5">Carbohydrate metabolism; tricarboxylic acid cycle.</text>
</comment>
<comment type="subunit">
    <text evidence="4">Component of complex II composed of eight subunits in plants: four classical SDH subunits SDH1, SDH2, SDH3 and SDH4 (a flavoprotein (FP), an iron-sulfur protein (IP), and a cytochrome b composed of a large and a small subunit.), as well as four subunits unknown in mitochondria from bacteria and heterotrophic eukaryotes.</text>
</comment>
<comment type="subcellular location">
    <subcellularLocation>
        <location evidence="5">Mitochondrion inner membrane</location>
        <topology evidence="2">Single-pass membrane protein</topology>
    </subcellularLocation>
</comment>
<keyword id="KW-0249">Electron transport</keyword>
<keyword id="KW-0349">Heme</keyword>
<keyword id="KW-0408">Iron</keyword>
<keyword id="KW-0472">Membrane</keyword>
<keyword id="KW-0479">Metal-binding</keyword>
<keyword id="KW-0496">Mitochondrion</keyword>
<keyword id="KW-0999">Mitochondrion inner membrane</keyword>
<keyword id="KW-1185">Reference proteome</keyword>
<keyword id="KW-0809">Transit peptide</keyword>
<keyword id="KW-0812">Transmembrane</keyword>
<keyword id="KW-1133">Transmembrane helix</keyword>
<keyword id="KW-0813">Transport</keyword>
<keyword id="KW-0816">Tricarboxylic acid cycle</keyword>
<evidence type="ECO:0000250" key="1">
    <source>
        <dbReference type="UniProtKB" id="P69054"/>
    </source>
</evidence>
<evidence type="ECO:0000255" key="2"/>
<evidence type="ECO:0000256" key="3">
    <source>
        <dbReference type="SAM" id="MobiDB-lite"/>
    </source>
</evidence>
<evidence type="ECO:0000269" key="4">
    <source>
    </source>
</evidence>
<evidence type="ECO:0000305" key="5"/>
<evidence type="ECO:0000312" key="6">
    <source>
        <dbReference type="EMBL" id="BAD07607.1"/>
    </source>
</evidence>
<evidence type="ECO:0000312" key="7">
    <source>
        <dbReference type="EMBL" id="BAF07635.1"/>
    </source>
</evidence>
<evidence type="ECO:0000312" key="8">
    <source>
        <dbReference type="EMBL" id="EEE56205.1"/>
    </source>
</evidence>
<protein>
    <recommendedName>
        <fullName evidence="5">Succinate dehydrogenase subunit 3-1, mitochondrial</fullName>
    </recommendedName>
</protein>
<organism>
    <name type="scientific">Oryza sativa subsp. japonica</name>
    <name type="common">Rice</name>
    <dbReference type="NCBI Taxonomy" id="39947"/>
    <lineage>
        <taxon>Eukaryota</taxon>
        <taxon>Viridiplantae</taxon>
        <taxon>Streptophyta</taxon>
        <taxon>Embryophyta</taxon>
        <taxon>Tracheophyta</taxon>
        <taxon>Spermatophyta</taxon>
        <taxon>Magnoliopsida</taxon>
        <taxon>Liliopsida</taxon>
        <taxon>Poales</taxon>
        <taxon>Poaceae</taxon>
        <taxon>BOP clade</taxon>
        <taxon>Oryzoideae</taxon>
        <taxon>Oryzeae</taxon>
        <taxon>Oryzinae</taxon>
        <taxon>Oryza</taxon>
        <taxon>Oryza sativa</taxon>
    </lineage>
</organism>